<comment type="function">
    <text evidence="1">This protein binds to 23S rRNA in the presence of protein L20.</text>
</comment>
<comment type="subunit">
    <text evidence="1">Part of the 50S ribosomal subunit. Contacts protein L20.</text>
</comment>
<comment type="similarity">
    <text evidence="1">Belongs to the bacterial ribosomal protein bL21 family.</text>
</comment>
<keyword id="KW-0687">Ribonucleoprotein</keyword>
<keyword id="KW-0689">Ribosomal protein</keyword>
<keyword id="KW-0694">RNA-binding</keyword>
<keyword id="KW-0699">rRNA-binding</keyword>
<accession>Q46X15</accession>
<sequence>MYAVVKTGGKQYKVAAGEKLKVEQIPADIGAEITLDQVLAVGAGDQIKFGTPLVSGASVKATVISQGRHDKVKIFKMRRRKHYQKRQGHRQNYTELRIEAINA</sequence>
<gene>
    <name evidence="1" type="primary">rplU</name>
    <name type="ordered locus">Reut_A2958</name>
</gene>
<dbReference type="EMBL" id="CP000090">
    <property type="protein sequence ID" value="AAZ62318.1"/>
    <property type="molecule type" value="Genomic_DNA"/>
</dbReference>
<dbReference type="SMR" id="Q46X15"/>
<dbReference type="STRING" id="264198.Reut_A2958"/>
<dbReference type="KEGG" id="reu:Reut_A2958"/>
<dbReference type="eggNOG" id="COG0261">
    <property type="taxonomic scope" value="Bacteria"/>
</dbReference>
<dbReference type="HOGENOM" id="CLU_061463_3_2_4"/>
<dbReference type="OrthoDB" id="9813334at2"/>
<dbReference type="GO" id="GO:0005737">
    <property type="term" value="C:cytoplasm"/>
    <property type="evidence" value="ECO:0007669"/>
    <property type="project" value="UniProtKB-ARBA"/>
</dbReference>
<dbReference type="GO" id="GO:1990904">
    <property type="term" value="C:ribonucleoprotein complex"/>
    <property type="evidence" value="ECO:0007669"/>
    <property type="project" value="UniProtKB-KW"/>
</dbReference>
<dbReference type="GO" id="GO:0005840">
    <property type="term" value="C:ribosome"/>
    <property type="evidence" value="ECO:0007669"/>
    <property type="project" value="UniProtKB-KW"/>
</dbReference>
<dbReference type="GO" id="GO:0019843">
    <property type="term" value="F:rRNA binding"/>
    <property type="evidence" value="ECO:0007669"/>
    <property type="project" value="UniProtKB-UniRule"/>
</dbReference>
<dbReference type="GO" id="GO:0003735">
    <property type="term" value="F:structural constituent of ribosome"/>
    <property type="evidence" value="ECO:0007669"/>
    <property type="project" value="InterPro"/>
</dbReference>
<dbReference type="GO" id="GO:0006412">
    <property type="term" value="P:translation"/>
    <property type="evidence" value="ECO:0007669"/>
    <property type="project" value="UniProtKB-UniRule"/>
</dbReference>
<dbReference type="HAMAP" id="MF_01363">
    <property type="entry name" value="Ribosomal_bL21"/>
    <property type="match status" value="1"/>
</dbReference>
<dbReference type="InterPro" id="IPR028909">
    <property type="entry name" value="bL21-like"/>
</dbReference>
<dbReference type="InterPro" id="IPR036164">
    <property type="entry name" value="bL21-like_sf"/>
</dbReference>
<dbReference type="InterPro" id="IPR001787">
    <property type="entry name" value="Ribosomal_bL21"/>
</dbReference>
<dbReference type="InterPro" id="IPR018258">
    <property type="entry name" value="Ribosomal_bL21_CS"/>
</dbReference>
<dbReference type="NCBIfam" id="TIGR00061">
    <property type="entry name" value="L21"/>
    <property type="match status" value="1"/>
</dbReference>
<dbReference type="PANTHER" id="PTHR21349">
    <property type="entry name" value="50S RIBOSOMAL PROTEIN L21"/>
    <property type="match status" value="1"/>
</dbReference>
<dbReference type="PANTHER" id="PTHR21349:SF0">
    <property type="entry name" value="LARGE RIBOSOMAL SUBUNIT PROTEIN BL21M"/>
    <property type="match status" value="1"/>
</dbReference>
<dbReference type="Pfam" id="PF00829">
    <property type="entry name" value="Ribosomal_L21p"/>
    <property type="match status" value="1"/>
</dbReference>
<dbReference type="SUPFAM" id="SSF141091">
    <property type="entry name" value="L21p-like"/>
    <property type="match status" value="1"/>
</dbReference>
<dbReference type="PROSITE" id="PS01169">
    <property type="entry name" value="RIBOSOMAL_L21"/>
    <property type="match status" value="1"/>
</dbReference>
<feature type="chain" id="PRO_0000270715" description="Large ribosomal subunit protein bL21">
    <location>
        <begin position="1"/>
        <end position="103"/>
    </location>
</feature>
<reference key="1">
    <citation type="journal article" date="2010" name="PLoS ONE">
        <title>The complete multipartite genome sequence of Cupriavidus necator JMP134, a versatile pollutant degrader.</title>
        <authorList>
            <person name="Lykidis A."/>
            <person name="Perez-Pantoja D."/>
            <person name="Ledger T."/>
            <person name="Mavromatis K."/>
            <person name="Anderson I.J."/>
            <person name="Ivanova N.N."/>
            <person name="Hooper S.D."/>
            <person name="Lapidus A."/>
            <person name="Lucas S."/>
            <person name="Gonzalez B."/>
            <person name="Kyrpides N.C."/>
        </authorList>
    </citation>
    <scope>NUCLEOTIDE SEQUENCE [LARGE SCALE GENOMIC DNA]</scope>
    <source>
        <strain>JMP134 / LMG 1197</strain>
    </source>
</reference>
<organism>
    <name type="scientific">Cupriavidus pinatubonensis (strain JMP 134 / LMG 1197)</name>
    <name type="common">Cupriavidus necator (strain JMP 134)</name>
    <dbReference type="NCBI Taxonomy" id="264198"/>
    <lineage>
        <taxon>Bacteria</taxon>
        <taxon>Pseudomonadati</taxon>
        <taxon>Pseudomonadota</taxon>
        <taxon>Betaproteobacteria</taxon>
        <taxon>Burkholderiales</taxon>
        <taxon>Burkholderiaceae</taxon>
        <taxon>Cupriavidus</taxon>
    </lineage>
</organism>
<evidence type="ECO:0000255" key="1">
    <source>
        <dbReference type="HAMAP-Rule" id="MF_01363"/>
    </source>
</evidence>
<evidence type="ECO:0000305" key="2"/>
<name>RL21_CUPPJ</name>
<proteinExistence type="inferred from homology"/>
<protein>
    <recommendedName>
        <fullName evidence="1">Large ribosomal subunit protein bL21</fullName>
    </recommendedName>
    <alternativeName>
        <fullName evidence="2">50S ribosomal protein L21</fullName>
    </alternativeName>
</protein>